<sequence>MLCFLRGMAFVPFLLVTWSSAAFIISYVVAVLSGHVNPFLPYISDTGTTPPESGIFGFMINFSAFLGAATMYTRYKIVEKQNETCYFSTPVFNLVSLALGLVGCIGMGIVANFQELAVPVVHDGGALLAFVCGVVYTLLQSIISYKSCPQWNSLTTCHVRMAISAVSCAAVVPMIACASLISITKLEWNPKEKDYIYHVVSAICEWTVAFGFIFYFLTFIQDFQSVTLRISTEINDDF</sequence>
<keyword id="KW-0025">Alternative splicing</keyword>
<keyword id="KW-0053">Apoptosis</keyword>
<keyword id="KW-0072">Autophagy</keyword>
<keyword id="KW-0458">Lysosome</keyword>
<keyword id="KW-0472">Membrane</keyword>
<keyword id="KW-1185">Reference proteome</keyword>
<keyword id="KW-0812">Transmembrane</keyword>
<keyword id="KW-1133">Transmembrane helix</keyword>
<protein>
    <recommendedName>
        <fullName>DNA damage-regulated autophagy modulator protein 1</fullName>
    </recommendedName>
    <alternativeName>
        <fullName>Damage-regulated autophagy modulator</fullName>
    </alternativeName>
</protein>
<name>DRAM1_MOUSE</name>
<gene>
    <name type="primary">Dram1</name>
    <name type="synonym">Dram</name>
</gene>
<dbReference type="EMBL" id="AK004552">
    <property type="protein sequence ID" value="BAB23366.2"/>
    <property type="molecule type" value="mRNA"/>
</dbReference>
<dbReference type="EMBL" id="BC021433">
    <property type="protein sequence ID" value="AAH21433.1"/>
    <property type="molecule type" value="mRNA"/>
</dbReference>
<dbReference type="CCDS" id="CCDS24109.1">
    <molecule id="Q9DC58-1"/>
</dbReference>
<dbReference type="RefSeq" id="NP_082154.2">
    <molecule id="Q9DC58-1"/>
    <property type="nucleotide sequence ID" value="NM_027878.2"/>
</dbReference>
<dbReference type="SMR" id="Q9DC58"/>
<dbReference type="FunCoup" id="Q9DC58">
    <property type="interactions" value="657"/>
</dbReference>
<dbReference type="IntAct" id="Q9DC58">
    <property type="interactions" value="1"/>
</dbReference>
<dbReference type="MINT" id="Q9DC58"/>
<dbReference type="STRING" id="10090.ENSMUSP00000020249"/>
<dbReference type="PhosphoSitePlus" id="Q9DC58"/>
<dbReference type="PaxDb" id="10090-ENSMUSP00000020249"/>
<dbReference type="ProteomicsDB" id="279571">
    <molecule id="Q9DC58-1"/>
</dbReference>
<dbReference type="ProteomicsDB" id="279572">
    <molecule id="Q9DC58-2"/>
</dbReference>
<dbReference type="Antibodypedia" id="9122">
    <property type="antibodies" value="284 antibodies from 30 providers"/>
</dbReference>
<dbReference type="DNASU" id="71712"/>
<dbReference type="Ensembl" id="ENSMUST00000020249.2">
    <molecule id="Q9DC58-1"/>
    <property type="protein sequence ID" value="ENSMUSP00000020249.2"/>
    <property type="gene ID" value="ENSMUSG00000020057.3"/>
</dbReference>
<dbReference type="GeneID" id="71712"/>
<dbReference type="KEGG" id="mmu:71712"/>
<dbReference type="UCSC" id="uc007grj.1">
    <molecule id="Q9DC58-1"/>
    <property type="organism name" value="mouse"/>
</dbReference>
<dbReference type="AGR" id="MGI:1918962"/>
<dbReference type="CTD" id="55332"/>
<dbReference type="MGI" id="MGI:1918962">
    <property type="gene designation" value="Dram1"/>
</dbReference>
<dbReference type="VEuPathDB" id="HostDB:ENSMUSG00000020057"/>
<dbReference type="eggNOG" id="KOG4320">
    <property type="taxonomic scope" value="Eukaryota"/>
</dbReference>
<dbReference type="GeneTree" id="ENSGT01030000234578"/>
<dbReference type="HOGENOM" id="CLU_059992_2_2_1"/>
<dbReference type="InParanoid" id="Q9DC58"/>
<dbReference type="OMA" id="QNRLALW"/>
<dbReference type="OrthoDB" id="191706at2759"/>
<dbReference type="PhylomeDB" id="Q9DC58"/>
<dbReference type="TreeFam" id="TF314508"/>
<dbReference type="BioGRID-ORCS" id="71712">
    <property type="hits" value="4 hits in 77 CRISPR screens"/>
</dbReference>
<dbReference type="ChiTaRS" id="Dram1">
    <property type="organism name" value="mouse"/>
</dbReference>
<dbReference type="PRO" id="PR:Q9DC58"/>
<dbReference type="Proteomes" id="UP000000589">
    <property type="component" value="Chromosome 10"/>
</dbReference>
<dbReference type="RNAct" id="Q9DC58">
    <property type="molecule type" value="protein"/>
</dbReference>
<dbReference type="Bgee" id="ENSMUSG00000020057">
    <property type="expression patterns" value="Expressed in left lung lobe and 142 other cell types or tissues"/>
</dbReference>
<dbReference type="ExpressionAtlas" id="Q9DC58">
    <property type="expression patterns" value="baseline and differential"/>
</dbReference>
<dbReference type="GO" id="GO:0005765">
    <property type="term" value="C:lysosomal membrane"/>
    <property type="evidence" value="ECO:0007669"/>
    <property type="project" value="UniProtKB-SubCell"/>
</dbReference>
<dbReference type="GO" id="GO:0006915">
    <property type="term" value="P:apoptotic process"/>
    <property type="evidence" value="ECO:0007669"/>
    <property type="project" value="UniProtKB-KW"/>
</dbReference>
<dbReference type="GO" id="GO:0006914">
    <property type="term" value="P:autophagy"/>
    <property type="evidence" value="ECO:0007669"/>
    <property type="project" value="UniProtKB-KW"/>
</dbReference>
<dbReference type="GO" id="GO:0090650">
    <property type="term" value="P:cellular response to oxygen-glucose deprivation"/>
    <property type="evidence" value="ECO:0007669"/>
    <property type="project" value="Ensembl"/>
</dbReference>
<dbReference type="GO" id="GO:0010506">
    <property type="term" value="P:regulation of autophagy"/>
    <property type="evidence" value="ECO:0007669"/>
    <property type="project" value="Ensembl"/>
</dbReference>
<dbReference type="InterPro" id="IPR050911">
    <property type="entry name" value="DRAM/TMEM150_Autophagy_Mod"/>
</dbReference>
<dbReference type="InterPro" id="IPR019402">
    <property type="entry name" value="Frag1/DRAM/Sfk1"/>
</dbReference>
<dbReference type="PANTHER" id="PTHR21324:SF11">
    <property type="entry name" value="DNA DAMAGE-REGULATED AUTOPHAGY MODULATOR PROTEIN 1"/>
    <property type="match status" value="1"/>
</dbReference>
<dbReference type="PANTHER" id="PTHR21324">
    <property type="entry name" value="FASTING-INDUCIBLE INTEGRAL MEMBRANE PROTEIN TM6P1-RELATED"/>
    <property type="match status" value="1"/>
</dbReference>
<dbReference type="Pfam" id="PF10277">
    <property type="entry name" value="Frag1"/>
    <property type="match status" value="1"/>
</dbReference>
<accession>Q9DC58</accession>
<accession>Q78J26</accession>
<evidence type="ECO:0000250" key="1"/>
<evidence type="ECO:0000255" key="2"/>
<evidence type="ECO:0000303" key="3">
    <source>
    </source>
</evidence>
<evidence type="ECO:0000305" key="4"/>
<proteinExistence type="evidence at transcript level"/>
<feature type="chain" id="PRO_0000287437" description="DNA damage-regulated autophagy modulator protein 1">
    <location>
        <begin position="1"/>
        <end position="238"/>
    </location>
</feature>
<feature type="transmembrane region" description="Helical" evidence="2">
    <location>
        <begin position="9"/>
        <end position="29"/>
    </location>
</feature>
<feature type="transmembrane region" description="Helical" evidence="2">
    <location>
        <begin position="53"/>
        <end position="73"/>
    </location>
</feature>
<feature type="transmembrane region" description="Helical" evidence="2">
    <location>
        <begin position="91"/>
        <end position="111"/>
    </location>
</feature>
<feature type="transmembrane region" description="Helical" evidence="2">
    <location>
        <begin position="116"/>
        <end position="136"/>
    </location>
</feature>
<feature type="transmembrane region" description="Helical" evidence="2">
    <location>
        <begin position="161"/>
        <end position="181"/>
    </location>
</feature>
<feature type="transmembrane region" description="Helical" evidence="2">
    <location>
        <begin position="200"/>
        <end position="220"/>
    </location>
</feature>
<feature type="splice variant" id="VSP_025461" description="In isoform 2." evidence="3">
    <location>
        <begin position="1"/>
        <end position="106"/>
    </location>
</feature>
<reference key="1">
    <citation type="journal article" date="2005" name="Science">
        <title>The transcriptional landscape of the mammalian genome.</title>
        <authorList>
            <person name="Carninci P."/>
            <person name="Kasukawa T."/>
            <person name="Katayama S."/>
            <person name="Gough J."/>
            <person name="Frith M.C."/>
            <person name="Maeda N."/>
            <person name="Oyama R."/>
            <person name="Ravasi T."/>
            <person name="Lenhard B."/>
            <person name="Wells C."/>
            <person name="Kodzius R."/>
            <person name="Shimokawa K."/>
            <person name="Bajic V.B."/>
            <person name="Brenner S.E."/>
            <person name="Batalov S."/>
            <person name="Forrest A.R."/>
            <person name="Zavolan M."/>
            <person name="Davis M.J."/>
            <person name="Wilming L.G."/>
            <person name="Aidinis V."/>
            <person name="Allen J.E."/>
            <person name="Ambesi-Impiombato A."/>
            <person name="Apweiler R."/>
            <person name="Aturaliya R.N."/>
            <person name="Bailey T.L."/>
            <person name="Bansal M."/>
            <person name="Baxter L."/>
            <person name="Beisel K.W."/>
            <person name="Bersano T."/>
            <person name="Bono H."/>
            <person name="Chalk A.M."/>
            <person name="Chiu K.P."/>
            <person name="Choudhary V."/>
            <person name="Christoffels A."/>
            <person name="Clutterbuck D.R."/>
            <person name="Crowe M.L."/>
            <person name="Dalla E."/>
            <person name="Dalrymple B.P."/>
            <person name="de Bono B."/>
            <person name="Della Gatta G."/>
            <person name="di Bernardo D."/>
            <person name="Down T."/>
            <person name="Engstrom P."/>
            <person name="Fagiolini M."/>
            <person name="Faulkner G."/>
            <person name="Fletcher C.F."/>
            <person name="Fukushima T."/>
            <person name="Furuno M."/>
            <person name="Futaki S."/>
            <person name="Gariboldi M."/>
            <person name="Georgii-Hemming P."/>
            <person name="Gingeras T.R."/>
            <person name="Gojobori T."/>
            <person name="Green R.E."/>
            <person name="Gustincich S."/>
            <person name="Harbers M."/>
            <person name="Hayashi Y."/>
            <person name="Hensch T.K."/>
            <person name="Hirokawa N."/>
            <person name="Hill D."/>
            <person name="Huminiecki L."/>
            <person name="Iacono M."/>
            <person name="Ikeo K."/>
            <person name="Iwama A."/>
            <person name="Ishikawa T."/>
            <person name="Jakt M."/>
            <person name="Kanapin A."/>
            <person name="Katoh M."/>
            <person name="Kawasawa Y."/>
            <person name="Kelso J."/>
            <person name="Kitamura H."/>
            <person name="Kitano H."/>
            <person name="Kollias G."/>
            <person name="Krishnan S.P."/>
            <person name="Kruger A."/>
            <person name="Kummerfeld S.K."/>
            <person name="Kurochkin I.V."/>
            <person name="Lareau L.F."/>
            <person name="Lazarevic D."/>
            <person name="Lipovich L."/>
            <person name="Liu J."/>
            <person name="Liuni S."/>
            <person name="McWilliam S."/>
            <person name="Madan Babu M."/>
            <person name="Madera M."/>
            <person name="Marchionni L."/>
            <person name="Matsuda H."/>
            <person name="Matsuzawa S."/>
            <person name="Miki H."/>
            <person name="Mignone F."/>
            <person name="Miyake S."/>
            <person name="Morris K."/>
            <person name="Mottagui-Tabar S."/>
            <person name="Mulder N."/>
            <person name="Nakano N."/>
            <person name="Nakauchi H."/>
            <person name="Ng P."/>
            <person name="Nilsson R."/>
            <person name="Nishiguchi S."/>
            <person name="Nishikawa S."/>
            <person name="Nori F."/>
            <person name="Ohara O."/>
            <person name="Okazaki Y."/>
            <person name="Orlando V."/>
            <person name="Pang K.C."/>
            <person name="Pavan W.J."/>
            <person name="Pavesi G."/>
            <person name="Pesole G."/>
            <person name="Petrovsky N."/>
            <person name="Piazza S."/>
            <person name="Reed J."/>
            <person name="Reid J.F."/>
            <person name="Ring B.Z."/>
            <person name="Ringwald M."/>
            <person name="Rost B."/>
            <person name="Ruan Y."/>
            <person name="Salzberg S.L."/>
            <person name="Sandelin A."/>
            <person name="Schneider C."/>
            <person name="Schoenbach C."/>
            <person name="Sekiguchi K."/>
            <person name="Semple C.A."/>
            <person name="Seno S."/>
            <person name="Sessa L."/>
            <person name="Sheng Y."/>
            <person name="Shibata Y."/>
            <person name="Shimada H."/>
            <person name="Shimada K."/>
            <person name="Silva D."/>
            <person name="Sinclair B."/>
            <person name="Sperling S."/>
            <person name="Stupka E."/>
            <person name="Sugiura K."/>
            <person name="Sultana R."/>
            <person name="Takenaka Y."/>
            <person name="Taki K."/>
            <person name="Tammoja K."/>
            <person name="Tan S.L."/>
            <person name="Tang S."/>
            <person name="Taylor M.S."/>
            <person name="Tegner J."/>
            <person name="Teichmann S.A."/>
            <person name="Ueda H.R."/>
            <person name="van Nimwegen E."/>
            <person name="Verardo R."/>
            <person name="Wei C.L."/>
            <person name="Yagi K."/>
            <person name="Yamanishi H."/>
            <person name="Zabarovsky E."/>
            <person name="Zhu S."/>
            <person name="Zimmer A."/>
            <person name="Hide W."/>
            <person name="Bult C."/>
            <person name="Grimmond S.M."/>
            <person name="Teasdale R.D."/>
            <person name="Liu E.T."/>
            <person name="Brusic V."/>
            <person name="Quackenbush J."/>
            <person name="Wahlestedt C."/>
            <person name="Mattick J.S."/>
            <person name="Hume D.A."/>
            <person name="Kai C."/>
            <person name="Sasaki D."/>
            <person name="Tomaru Y."/>
            <person name="Fukuda S."/>
            <person name="Kanamori-Katayama M."/>
            <person name="Suzuki M."/>
            <person name="Aoki J."/>
            <person name="Arakawa T."/>
            <person name="Iida J."/>
            <person name="Imamura K."/>
            <person name="Itoh M."/>
            <person name="Kato T."/>
            <person name="Kawaji H."/>
            <person name="Kawagashira N."/>
            <person name="Kawashima T."/>
            <person name="Kojima M."/>
            <person name="Kondo S."/>
            <person name="Konno H."/>
            <person name="Nakano K."/>
            <person name="Ninomiya N."/>
            <person name="Nishio T."/>
            <person name="Okada M."/>
            <person name="Plessy C."/>
            <person name="Shibata K."/>
            <person name="Shiraki T."/>
            <person name="Suzuki S."/>
            <person name="Tagami M."/>
            <person name="Waki K."/>
            <person name="Watahiki A."/>
            <person name="Okamura-Oho Y."/>
            <person name="Suzuki H."/>
            <person name="Kawai J."/>
            <person name="Hayashizaki Y."/>
        </authorList>
    </citation>
    <scope>NUCLEOTIDE SEQUENCE [LARGE SCALE MRNA] (ISOFORM 1)</scope>
    <source>
        <strain>C57BL/6J</strain>
        <tissue>Lung</tissue>
    </source>
</reference>
<reference key="2">
    <citation type="journal article" date="2004" name="Genome Res.">
        <title>The status, quality, and expansion of the NIH full-length cDNA project: the Mammalian Gene Collection (MGC).</title>
        <authorList>
            <consortium name="The MGC Project Team"/>
        </authorList>
    </citation>
    <scope>NUCLEOTIDE SEQUENCE [LARGE SCALE MRNA] (ISOFORM 2)</scope>
    <source>
        <strain>FVB/N</strain>
        <tissue>Mammary tumor</tissue>
    </source>
</reference>
<organism>
    <name type="scientific">Mus musculus</name>
    <name type="common">Mouse</name>
    <dbReference type="NCBI Taxonomy" id="10090"/>
    <lineage>
        <taxon>Eukaryota</taxon>
        <taxon>Metazoa</taxon>
        <taxon>Chordata</taxon>
        <taxon>Craniata</taxon>
        <taxon>Vertebrata</taxon>
        <taxon>Euteleostomi</taxon>
        <taxon>Mammalia</taxon>
        <taxon>Eutheria</taxon>
        <taxon>Euarchontoglires</taxon>
        <taxon>Glires</taxon>
        <taxon>Rodentia</taxon>
        <taxon>Myomorpha</taxon>
        <taxon>Muroidea</taxon>
        <taxon>Muridae</taxon>
        <taxon>Murinae</taxon>
        <taxon>Mus</taxon>
        <taxon>Mus</taxon>
    </lineage>
</organism>
<comment type="function">
    <text evidence="1">Lysosomal modulator of autophagy that plays a central role in p53/TP53-mediated apoptosis. Not involved in p73/TP73-mediated autophagy (By similarity).</text>
</comment>
<comment type="subcellular location">
    <subcellularLocation>
        <location evidence="1">Lysosome membrane</location>
        <topology evidence="1">Multi-pass membrane protein</topology>
    </subcellularLocation>
</comment>
<comment type="alternative products">
    <event type="alternative splicing"/>
    <isoform>
        <id>Q9DC58-1</id>
        <name>1</name>
        <sequence type="displayed"/>
    </isoform>
    <isoform>
        <id>Q9DC58-2</id>
        <name>2</name>
        <sequence type="described" ref="VSP_025461"/>
    </isoform>
</comment>
<comment type="similarity">
    <text evidence="4">Belongs to the DRAM/TMEM150 family.</text>
</comment>